<dbReference type="EC" id="3.1.26.4" evidence="1"/>
<dbReference type="EMBL" id="CP000647">
    <property type="protein sequence ID" value="ABR75656.1"/>
    <property type="molecule type" value="Genomic_DNA"/>
</dbReference>
<dbReference type="RefSeq" id="WP_002889376.1">
    <property type="nucleotide sequence ID" value="NC_009648.1"/>
</dbReference>
<dbReference type="SMR" id="A6T4Y5"/>
<dbReference type="STRING" id="272620.KPN_00196"/>
<dbReference type="PaxDb" id="272620-KPN_00196"/>
<dbReference type="EnsemblBacteria" id="ABR75656">
    <property type="protein sequence ID" value="ABR75656"/>
    <property type="gene ID" value="KPN_00196"/>
</dbReference>
<dbReference type="KEGG" id="kpn:KPN_00196"/>
<dbReference type="HOGENOM" id="CLU_036532_3_2_6"/>
<dbReference type="Proteomes" id="UP000000265">
    <property type="component" value="Chromosome"/>
</dbReference>
<dbReference type="GO" id="GO:0005737">
    <property type="term" value="C:cytoplasm"/>
    <property type="evidence" value="ECO:0007669"/>
    <property type="project" value="UniProtKB-SubCell"/>
</dbReference>
<dbReference type="GO" id="GO:0032299">
    <property type="term" value="C:ribonuclease H2 complex"/>
    <property type="evidence" value="ECO:0007669"/>
    <property type="project" value="TreeGrafter"/>
</dbReference>
<dbReference type="GO" id="GO:0030145">
    <property type="term" value="F:manganese ion binding"/>
    <property type="evidence" value="ECO:0007669"/>
    <property type="project" value="UniProtKB-UniRule"/>
</dbReference>
<dbReference type="GO" id="GO:0003723">
    <property type="term" value="F:RNA binding"/>
    <property type="evidence" value="ECO:0007669"/>
    <property type="project" value="InterPro"/>
</dbReference>
<dbReference type="GO" id="GO:0004523">
    <property type="term" value="F:RNA-DNA hybrid ribonuclease activity"/>
    <property type="evidence" value="ECO:0007669"/>
    <property type="project" value="UniProtKB-UniRule"/>
</dbReference>
<dbReference type="GO" id="GO:0043137">
    <property type="term" value="P:DNA replication, removal of RNA primer"/>
    <property type="evidence" value="ECO:0007669"/>
    <property type="project" value="TreeGrafter"/>
</dbReference>
<dbReference type="GO" id="GO:0006298">
    <property type="term" value="P:mismatch repair"/>
    <property type="evidence" value="ECO:0007669"/>
    <property type="project" value="TreeGrafter"/>
</dbReference>
<dbReference type="CDD" id="cd07182">
    <property type="entry name" value="RNase_HII_bacteria_HII_like"/>
    <property type="match status" value="1"/>
</dbReference>
<dbReference type="FunFam" id="3.30.420.10:FF:000006">
    <property type="entry name" value="Ribonuclease HII"/>
    <property type="match status" value="1"/>
</dbReference>
<dbReference type="Gene3D" id="3.30.420.10">
    <property type="entry name" value="Ribonuclease H-like superfamily/Ribonuclease H"/>
    <property type="match status" value="1"/>
</dbReference>
<dbReference type="HAMAP" id="MF_00052_B">
    <property type="entry name" value="RNase_HII_B"/>
    <property type="match status" value="1"/>
</dbReference>
<dbReference type="InterPro" id="IPR022898">
    <property type="entry name" value="RNase_HII"/>
</dbReference>
<dbReference type="InterPro" id="IPR001352">
    <property type="entry name" value="RNase_HII/HIII"/>
</dbReference>
<dbReference type="InterPro" id="IPR024567">
    <property type="entry name" value="RNase_HII/HIII_dom"/>
</dbReference>
<dbReference type="InterPro" id="IPR012337">
    <property type="entry name" value="RNaseH-like_sf"/>
</dbReference>
<dbReference type="InterPro" id="IPR036397">
    <property type="entry name" value="RNaseH_sf"/>
</dbReference>
<dbReference type="NCBIfam" id="NF000594">
    <property type="entry name" value="PRK00015.1-1"/>
    <property type="match status" value="1"/>
</dbReference>
<dbReference type="NCBIfam" id="NF000595">
    <property type="entry name" value="PRK00015.1-3"/>
    <property type="match status" value="1"/>
</dbReference>
<dbReference type="NCBIfam" id="NF000596">
    <property type="entry name" value="PRK00015.1-4"/>
    <property type="match status" value="1"/>
</dbReference>
<dbReference type="PANTHER" id="PTHR10954">
    <property type="entry name" value="RIBONUCLEASE H2 SUBUNIT A"/>
    <property type="match status" value="1"/>
</dbReference>
<dbReference type="PANTHER" id="PTHR10954:SF18">
    <property type="entry name" value="RIBONUCLEASE HII"/>
    <property type="match status" value="1"/>
</dbReference>
<dbReference type="Pfam" id="PF01351">
    <property type="entry name" value="RNase_HII"/>
    <property type="match status" value="1"/>
</dbReference>
<dbReference type="SUPFAM" id="SSF53098">
    <property type="entry name" value="Ribonuclease H-like"/>
    <property type="match status" value="1"/>
</dbReference>
<dbReference type="PROSITE" id="PS51975">
    <property type="entry name" value="RNASE_H_2"/>
    <property type="match status" value="1"/>
</dbReference>
<feature type="chain" id="PRO_1000031152" description="Ribonuclease HII">
    <location>
        <begin position="1"/>
        <end position="199"/>
    </location>
</feature>
<feature type="domain" description="RNase H type-2" evidence="2">
    <location>
        <begin position="10"/>
        <end position="199"/>
    </location>
</feature>
<feature type="binding site" evidence="1">
    <location>
        <position position="16"/>
    </location>
    <ligand>
        <name>a divalent metal cation</name>
        <dbReference type="ChEBI" id="CHEBI:60240"/>
    </ligand>
</feature>
<feature type="binding site" evidence="1">
    <location>
        <position position="17"/>
    </location>
    <ligand>
        <name>a divalent metal cation</name>
        <dbReference type="ChEBI" id="CHEBI:60240"/>
    </ligand>
</feature>
<feature type="binding site" evidence="1">
    <location>
        <position position="108"/>
    </location>
    <ligand>
        <name>a divalent metal cation</name>
        <dbReference type="ChEBI" id="CHEBI:60240"/>
    </ligand>
</feature>
<organism>
    <name type="scientific">Klebsiella pneumoniae subsp. pneumoniae (strain ATCC 700721 / MGH 78578)</name>
    <dbReference type="NCBI Taxonomy" id="272620"/>
    <lineage>
        <taxon>Bacteria</taxon>
        <taxon>Pseudomonadati</taxon>
        <taxon>Pseudomonadota</taxon>
        <taxon>Gammaproteobacteria</taxon>
        <taxon>Enterobacterales</taxon>
        <taxon>Enterobacteriaceae</taxon>
        <taxon>Klebsiella/Raoultella group</taxon>
        <taxon>Klebsiella</taxon>
        <taxon>Klebsiella pneumoniae complex</taxon>
    </lineage>
</organism>
<gene>
    <name evidence="1" type="primary">rnhB</name>
    <name type="ordered locus">KPN78578_01950</name>
    <name type="ORF">KPN_00196</name>
</gene>
<name>RNH2_KLEP7</name>
<protein>
    <recommendedName>
        <fullName evidence="1">Ribonuclease HII</fullName>
        <shortName evidence="1">RNase HII</shortName>
        <ecNumber evidence="1">3.1.26.4</ecNumber>
    </recommendedName>
</protein>
<sequence length="199" mass="21580">MMEFVYPHTHLVAGVDEVGRGPLVGAVVTAAVILDPAKPIVGLNDSKKLSEKRRLALFDEIKEKALCWSLGRAEPHEIDELNILHATMLAMQRAVAGLSIVPEFVLIDGNRCPSLPMPSQAVVKGDSRVAEISAASILAKVTRDAEMATLDLAFPHYGFAQHKGYPTAVHLQKLQEHGATEHHRRSFGPVKRALGLASN</sequence>
<evidence type="ECO:0000255" key="1">
    <source>
        <dbReference type="HAMAP-Rule" id="MF_00052"/>
    </source>
</evidence>
<evidence type="ECO:0000255" key="2">
    <source>
        <dbReference type="PROSITE-ProRule" id="PRU01319"/>
    </source>
</evidence>
<reference key="1">
    <citation type="submission" date="2006-09" db="EMBL/GenBank/DDBJ databases">
        <authorList>
            <consortium name="The Klebsiella pneumonia Genome Sequencing Project"/>
            <person name="McClelland M."/>
            <person name="Sanderson E.K."/>
            <person name="Spieth J."/>
            <person name="Clifton W.S."/>
            <person name="Latreille P."/>
            <person name="Sabo A."/>
            <person name="Pepin K."/>
            <person name="Bhonagiri V."/>
            <person name="Porwollik S."/>
            <person name="Ali J."/>
            <person name="Wilson R.K."/>
        </authorList>
    </citation>
    <scope>NUCLEOTIDE SEQUENCE [LARGE SCALE GENOMIC DNA]</scope>
    <source>
        <strain>ATCC 700721 / MGH 78578</strain>
    </source>
</reference>
<keyword id="KW-0963">Cytoplasm</keyword>
<keyword id="KW-0255">Endonuclease</keyword>
<keyword id="KW-0378">Hydrolase</keyword>
<keyword id="KW-0464">Manganese</keyword>
<keyword id="KW-0479">Metal-binding</keyword>
<keyword id="KW-0540">Nuclease</keyword>
<accession>A6T4Y5</accession>
<proteinExistence type="inferred from homology"/>
<comment type="function">
    <text evidence="1">Endonuclease that specifically degrades the RNA of RNA-DNA hybrids.</text>
</comment>
<comment type="catalytic activity">
    <reaction evidence="1">
        <text>Endonucleolytic cleavage to 5'-phosphomonoester.</text>
        <dbReference type="EC" id="3.1.26.4"/>
    </reaction>
</comment>
<comment type="cofactor">
    <cofactor evidence="1">
        <name>Mn(2+)</name>
        <dbReference type="ChEBI" id="CHEBI:29035"/>
    </cofactor>
    <cofactor evidence="1">
        <name>Mg(2+)</name>
        <dbReference type="ChEBI" id="CHEBI:18420"/>
    </cofactor>
    <text evidence="1">Manganese or magnesium. Binds 1 divalent metal ion per monomer in the absence of substrate. May bind a second metal ion after substrate binding.</text>
</comment>
<comment type="subcellular location">
    <subcellularLocation>
        <location evidence="1">Cytoplasm</location>
    </subcellularLocation>
</comment>
<comment type="similarity">
    <text evidence="1">Belongs to the RNase HII family.</text>
</comment>